<dbReference type="EC" id="7.1.1.-" evidence="1"/>
<dbReference type="EMBL" id="AJ242867">
    <property type="protein sequence ID" value="CAB44668.1"/>
    <property type="molecule type" value="Genomic_DNA"/>
</dbReference>
<dbReference type="EMBL" id="BA000019">
    <property type="protein sequence ID" value="BAB77747.1"/>
    <property type="molecule type" value="Genomic_DNA"/>
</dbReference>
<dbReference type="PIR" id="AG1834">
    <property type="entry name" value="AG1834"/>
</dbReference>
<dbReference type="RefSeq" id="WP_010994400.1">
    <property type="nucleotide sequence ID" value="NC_003272.1"/>
</dbReference>
<dbReference type="SMR" id="Q8Z076"/>
<dbReference type="STRING" id="103690.gene:10492230"/>
<dbReference type="KEGG" id="ana:alr0223"/>
<dbReference type="eggNOG" id="COG1005">
    <property type="taxonomic scope" value="Bacteria"/>
</dbReference>
<dbReference type="OrthoDB" id="9803734at2"/>
<dbReference type="Proteomes" id="UP000002483">
    <property type="component" value="Chromosome"/>
</dbReference>
<dbReference type="GO" id="GO:0031676">
    <property type="term" value="C:plasma membrane-derived thylakoid membrane"/>
    <property type="evidence" value="ECO:0007669"/>
    <property type="project" value="UniProtKB-SubCell"/>
</dbReference>
<dbReference type="GO" id="GO:0003954">
    <property type="term" value="F:NADH dehydrogenase activity"/>
    <property type="evidence" value="ECO:0007669"/>
    <property type="project" value="TreeGrafter"/>
</dbReference>
<dbReference type="GO" id="GO:0016655">
    <property type="term" value="F:oxidoreductase activity, acting on NAD(P)H, quinone or similar compound as acceptor"/>
    <property type="evidence" value="ECO:0007669"/>
    <property type="project" value="UniProtKB-UniRule"/>
</dbReference>
<dbReference type="GO" id="GO:0048038">
    <property type="term" value="F:quinone binding"/>
    <property type="evidence" value="ECO:0007669"/>
    <property type="project" value="UniProtKB-KW"/>
</dbReference>
<dbReference type="GO" id="GO:0009060">
    <property type="term" value="P:aerobic respiration"/>
    <property type="evidence" value="ECO:0007669"/>
    <property type="project" value="TreeGrafter"/>
</dbReference>
<dbReference type="GO" id="GO:0019684">
    <property type="term" value="P:photosynthesis, light reaction"/>
    <property type="evidence" value="ECO:0007669"/>
    <property type="project" value="UniProtKB-UniRule"/>
</dbReference>
<dbReference type="HAMAP" id="MF_01350">
    <property type="entry name" value="NDH1_NuoH"/>
    <property type="match status" value="1"/>
</dbReference>
<dbReference type="InterPro" id="IPR001694">
    <property type="entry name" value="NADH_UbQ_OxRdtase_su1/FPO"/>
</dbReference>
<dbReference type="InterPro" id="IPR018086">
    <property type="entry name" value="NADH_UbQ_OxRdtase_su1_CS"/>
</dbReference>
<dbReference type="NCBIfam" id="NF004741">
    <property type="entry name" value="PRK06076.1-2"/>
    <property type="match status" value="1"/>
</dbReference>
<dbReference type="NCBIfam" id="NF004744">
    <property type="entry name" value="PRK06076.1-5"/>
    <property type="match status" value="1"/>
</dbReference>
<dbReference type="PANTHER" id="PTHR11432">
    <property type="entry name" value="NADH DEHYDROGENASE SUBUNIT 1"/>
    <property type="match status" value="1"/>
</dbReference>
<dbReference type="PANTHER" id="PTHR11432:SF3">
    <property type="entry name" value="NADH-UBIQUINONE OXIDOREDUCTASE CHAIN 1"/>
    <property type="match status" value="1"/>
</dbReference>
<dbReference type="Pfam" id="PF00146">
    <property type="entry name" value="NADHdh"/>
    <property type="match status" value="1"/>
</dbReference>
<dbReference type="PROSITE" id="PS00667">
    <property type="entry name" value="COMPLEX1_ND1_1"/>
    <property type="match status" value="1"/>
</dbReference>
<dbReference type="PROSITE" id="PS00668">
    <property type="entry name" value="COMPLEX1_ND1_2"/>
    <property type="match status" value="1"/>
</dbReference>
<comment type="function">
    <text evidence="1">NDH-1 shuttles electrons from an unknown electron donor, via FMN and iron-sulfur (Fe-S) centers, to quinones in the respiratory and/or the photosynthetic chain. The immediate electron acceptor for the enzyme in this species is believed to be plastoquinone. Couples the redox reaction to proton translocation, and thus conserves the redox energy in a proton gradient.</text>
</comment>
<comment type="catalytic activity">
    <reaction evidence="1">
        <text>a plastoquinone + NADH + (n+1) H(+)(in) = a plastoquinol + NAD(+) + n H(+)(out)</text>
        <dbReference type="Rhea" id="RHEA:42608"/>
        <dbReference type="Rhea" id="RHEA-COMP:9561"/>
        <dbReference type="Rhea" id="RHEA-COMP:9562"/>
        <dbReference type="ChEBI" id="CHEBI:15378"/>
        <dbReference type="ChEBI" id="CHEBI:17757"/>
        <dbReference type="ChEBI" id="CHEBI:57540"/>
        <dbReference type="ChEBI" id="CHEBI:57945"/>
        <dbReference type="ChEBI" id="CHEBI:62192"/>
    </reaction>
</comment>
<comment type="catalytic activity">
    <reaction evidence="1">
        <text>a plastoquinone + NADPH + (n+1) H(+)(in) = a plastoquinol + NADP(+) + n H(+)(out)</text>
        <dbReference type="Rhea" id="RHEA:42612"/>
        <dbReference type="Rhea" id="RHEA-COMP:9561"/>
        <dbReference type="Rhea" id="RHEA-COMP:9562"/>
        <dbReference type="ChEBI" id="CHEBI:15378"/>
        <dbReference type="ChEBI" id="CHEBI:17757"/>
        <dbReference type="ChEBI" id="CHEBI:57783"/>
        <dbReference type="ChEBI" id="CHEBI:58349"/>
        <dbReference type="ChEBI" id="CHEBI:62192"/>
    </reaction>
</comment>
<comment type="subunit">
    <text evidence="1">NDH-1 is composed of at least 11 different subunits.</text>
</comment>
<comment type="subcellular location">
    <subcellularLocation>
        <location evidence="1">Cellular thylakoid membrane</location>
        <topology evidence="1">Multi-pass membrane protein</topology>
    </subcellularLocation>
</comment>
<comment type="similarity">
    <text evidence="1">Belongs to the complex I subunit 1 family.</text>
</comment>
<gene>
    <name evidence="1" type="primary">ndhA</name>
    <name type="ordered locus">alr0223</name>
</gene>
<name>NU1C_NOSS1</name>
<protein>
    <recommendedName>
        <fullName evidence="1">NAD(P)H-quinone oxidoreductase subunit 1</fullName>
        <ecNumber evidence="1">7.1.1.-</ecNumber>
    </recommendedName>
    <alternativeName>
        <fullName evidence="1">NAD(P)H dehydrogenase I subunit 1</fullName>
    </alternativeName>
    <alternativeName>
        <fullName evidence="1">NDH-1 subunit 1</fullName>
    </alternativeName>
    <alternativeName>
        <fullName evidence="1">NDH-A</fullName>
    </alternativeName>
</protein>
<evidence type="ECO:0000255" key="1">
    <source>
        <dbReference type="HAMAP-Rule" id="MF_01350"/>
    </source>
</evidence>
<evidence type="ECO:0000305" key="2"/>
<reference key="1">
    <citation type="submission" date="1999-06" db="EMBL/GenBank/DDBJ databases">
        <title>Isolation of the ndhAIGE gene cluster of Anabaena sp. PCC 7120.</title>
        <authorList>
            <person name="Schiefer W."/>
            <person name="Happe T."/>
        </authorList>
    </citation>
    <scope>NUCLEOTIDE SEQUENCE [GENOMIC DNA]</scope>
</reference>
<reference key="2">
    <citation type="journal article" date="2001" name="DNA Res.">
        <title>Complete genomic sequence of the filamentous nitrogen-fixing cyanobacterium Anabaena sp. strain PCC 7120.</title>
        <authorList>
            <person name="Kaneko T."/>
            <person name="Nakamura Y."/>
            <person name="Wolk C.P."/>
            <person name="Kuritz T."/>
            <person name="Sasamoto S."/>
            <person name="Watanabe A."/>
            <person name="Iriguchi M."/>
            <person name="Ishikawa A."/>
            <person name="Kawashima K."/>
            <person name="Kimura T."/>
            <person name="Kishida Y."/>
            <person name="Kohara M."/>
            <person name="Matsumoto M."/>
            <person name="Matsuno A."/>
            <person name="Muraki A."/>
            <person name="Nakazaki N."/>
            <person name="Shimpo S."/>
            <person name="Sugimoto M."/>
            <person name="Takazawa M."/>
            <person name="Yamada M."/>
            <person name="Yasuda M."/>
            <person name="Tabata S."/>
        </authorList>
    </citation>
    <scope>NUCLEOTIDE SEQUENCE [LARGE SCALE GENOMIC DNA]</scope>
    <source>
        <strain>PCC 7120 / SAG 25.82 / UTEX 2576</strain>
    </source>
</reference>
<accession>Q8Z076</accession>
<accession>Q9WWM7</accession>
<sequence>MNSGIDLQGTFIKSLIDLGIPPGTAKAIWMPLPMILMLIGATVGVLVCVWLERKISAAAQQRIGPEYIGPLGLLAPVADGLKLVFKEDIVPAQADPWLFTLGPILVVLPVFLSYLIVPFGQNIVITNVGTGIFLWIALSSIQPIGLLMAGYSSNNKYSLLGGLRAAAQSISYEIPLALSVLAIVMMSNSLSTVDIVNQQSDYGILGWNIWRQPLGFMIFWIAALAECERLPFDLPEAEEELVAGYQTEYSGMKFALFYLSSYVNLILSALLVAVLYLGGWDFPIPINVLANLVGVSEANPVLQVVSAALGITMTLVKAYFLVFIAILLRWTVPRVRIDQLLDLGWKFLLPVGLVNLLLTAALKLAFPVAFGG</sequence>
<proteinExistence type="inferred from homology"/>
<organism>
    <name type="scientific">Nostoc sp. (strain PCC 7120 / SAG 25.82 / UTEX 2576)</name>
    <dbReference type="NCBI Taxonomy" id="103690"/>
    <lineage>
        <taxon>Bacteria</taxon>
        <taxon>Bacillati</taxon>
        <taxon>Cyanobacteriota</taxon>
        <taxon>Cyanophyceae</taxon>
        <taxon>Nostocales</taxon>
        <taxon>Nostocaceae</taxon>
        <taxon>Nostoc</taxon>
    </lineage>
</organism>
<keyword id="KW-0472">Membrane</keyword>
<keyword id="KW-0520">NAD</keyword>
<keyword id="KW-0521">NADP</keyword>
<keyword id="KW-0618">Plastoquinone</keyword>
<keyword id="KW-0874">Quinone</keyword>
<keyword id="KW-1185">Reference proteome</keyword>
<keyword id="KW-0793">Thylakoid</keyword>
<keyword id="KW-1278">Translocase</keyword>
<keyword id="KW-0812">Transmembrane</keyword>
<keyword id="KW-1133">Transmembrane helix</keyword>
<feature type="chain" id="PRO_0000117518" description="NAD(P)H-quinone oxidoreductase subunit 1">
    <location>
        <begin position="1"/>
        <end position="372"/>
    </location>
</feature>
<feature type="transmembrane region" description="Helical" evidence="1">
    <location>
        <begin position="27"/>
        <end position="47"/>
    </location>
</feature>
<feature type="transmembrane region" description="Helical" evidence="1">
    <location>
        <begin position="65"/>
        <end position="85"/>
    </location>
</feature>
<feature type="transmembrane region" description="Helical" evidence="1">
    <location>
        <begin position="97"/>
        <end position="117"/>
    </location>
</feature>
<feature type="transmembrane region" description="Helical" evidence="1">
    <location>
        <begin position="128"/>
        <end position="148"/>
    </location>
</feature>
<feature type="transmembrane region" description="Helical" evidence="1">
    <location>
        <begin position="166"/>
        <end position="186"/>
    </location>
</feature>
<feature type="transmembrane region" description="Helical" evidence="1">
    <location>
        <begin position="204"/>
        <end position="224"/>
    </location>
</feature>
<feature type="transmembrane region" description="Helical" evidence="1">
    <location>
        <begin position="266"/>
        <end position="286"/>
    </location>
</feature>
<feature type="transmembrane region" description="Helical" evidence="1">
    <location>
        <begin position="308"/>
        <end position="328"/>
    </location>
</feature>
<feature type="transmembrane region" description="Helical" evidence="1">
    <location>
        <begin position="347"/>
        <end position="367"/>
    </location>
</feature>
<feature type="sequence conflict" description="In Ref. 1; CAB44668." evidence="2" ref="1">
    <original>D</original>
    <variation>G</variation>
    <location>
        <position position="201"/>
    </location>
</feature>
<feature type="sequence conflict" description="In Ref. 1." evidence="2" ref="1">
    <original>LLPVGLVNLLLTAA</original>
    <variation>CYQLVSEPTFNRQP</variation>
    <location>
        <begin position="348"/>
        <end position="361"/>
    </location>
</feature>
<feature type="sequence conflict" description="In Ref. 1; CAB44668." evidence="2" ref="1">
    <original>VAFG</original>
    <variation>RPSA</variation>
    <location>
        <begin position="368"/>
        <end position="371"/>
    </location>
</feature>